<accession>Q3KLV8</accession>
<dbReference type="EMBL" id="CP000051">
    <property type="protein sequence ID" value="AAX50664.1"/>
    <property type="molecule type" value="Genomic_DNA"/>
</dbReference>
<dbReference type="RefSeq" id="WP_011324721.1">
    <property type="nucleotide sequence ID" value="NC_007429.1"/>
</dbReference>
<dbReference type="SMR" id="Q3KLV8"/>
<dbReference type="KEGG" id="cta:CTA_0430"/>
<dbReference type="HOGENOM" id="CLU_057217_5_2_0"/>
<dbReference type="Proteomes" id="UP000002532">
    <property type="component" value="Chromosome"/>
</dbReference>
<dbReference type="GO" id="GO:0005737">
    <property type="term" value="C:cytoplasm"/>
    <property type="evidence" value="ECO:0007669"/>
    <property type="project" value="UniProtKB-SubCell"/>
</dbReference>
<dbReference type="GO" id="GO:0000774">
    <property type="term" value="F:adenyl-nucleotide exchange factor activity"/>
    <property type="evidence" value="ECO:0007669"/>
    <property type="project" value="InterPro"/>
</dbReference>
<dbReference type="GO" id="GO:0042803">
    <property type="term" value="F:protein homodimerization activity"/>
    <property type="evidence" value="ECO:0007669"/>
    <property type="project" value="InterPro"/>
</dbReference>
<dbReference type="GO" id="GO:0051087">
    <property type="term" value="F:protein-folding chaperone binding"/>
    <property type="evidence" value="ECO:0007669"/>
    <property type="project" value="InterPro"/>
</dbReference>
<dbReference type="GO" id="GO:0051082">
    <property type="term" value="F:unfolded protein binding"/>
    <property type="evidence" value="ECO:0007669"/>
    <property type="project" value="TreeGrafter"/>
</dbReference>
<dbReference type="GO" id="GO:0006457">
    <property type="term" value="P:protein folding"/>
    <property type="evidence" value="ECO:0007669"/>
    <property type="project" value="InterPro"/>
</dbReference>
<dbReference type="CDD" id="cd00446">
    <property type="entry name" value="GrpE"/>
    <property type="match status" value="1"/>
</dbReference>
<dbReference type="FunFam" id="2.30.22.10:FF:000001">
    <property type="entry name" value="Protein GrpE"/>
    <property type="match status" value="1"/>
</dbReference>
<dbReference type="FunFam" id="3.90.20.20:FF:000020">
    <property type="entry name" value="Protein GrpE"/>
    <property type="match status" value="1"/>
</dbReference>
<dbReference type="Gene3D" id="3.90.20.20">
    <property type="match status" value="1"/>
</dbReference>
<dbReference type="Gene3D" id="2.30.22.10">
    <property type="entry name" value="Head domain of nucleotide exchange factor GrpE"/>
    <property type="match status" value="1"/>
</dbReference>
<dbReference type="HAMAP" id="MF_01151">
    <property type="entry name" value="GrpE"/>
    <property type="match status" value="1"/>
</dbReference>
<dbReference type="InterPro" id="IPR000740">
    <property type="entry name" value="GrpE"/>
</dbReference>
<dbReference type="InterPro" id="IPR013805">
    <property type="entry name" value="GrpE_coiled_coil"/>
</dbReference>
<dbReference type="InterPro" id="IPR009012">
    <property type="entry name" value="GrpE_head"/>
</dbReference>
<dbReference type="PANTHER" id="PTHR21237">
    <property type="entry name" value="GRPE PROTEIN"/>
    <property type="match status" value="1"/>
</dbReference>
<dbReference type="PANTHER" id="PTHR21237:SF23">
    <property type="entry name" value="GRPE PROTEIN HOMOLOG, MITOCHONDRIAL"/>
    <property type="match status" value="1"/>
</dbReference>
<dbReference type="Pfam" id="PF01025">
    <property type="entry name" value="GrpE"/>
    <property type="match status" value="1"/>
</dbReference>
<dbReference type="PRINTS" id="PR00773">
    <property type="entry name" value="GRPEPROTEIN"/>
</dbReference>
<dbReference type="SUPFAM" id="SSF58014">
    <property type="entry name" value="Coiled-coil domain of nucleotide exchange factor GrpE"/>
    <property type="match status" value="1"/>
</dbReference>
<dbReference type="SUPFAM" id="SSF51064">
    <property type="entry name" value="Head domain of nucleotide exchange factor GrpE"/>
    <property type="match status" value="1"/>
</dbReference>
<dbReference type="PROSITE" id="PS01071">
    <property type="entry name" value="GRPE"/>
    <property type="match status" value="1"/>
</dbReference>
<protein>
    <recommendedName>
        <fullName evidence="1">Protein GrpE</fullName>
    </recommendedName>
    <alternativeName>
        <fullName evidence="1">HSP-70 cofactor</fullName>
    </alternativeName>
</protein>
<proteinExistence type="inferred from homology"/>
<evidence type="ECO:0000255" key="1">
    <source>
        <dbReference type="HAMAP-Rule" id="MF_01151"/>
    </source>
</evidence>
<evidence type="ECO:0000256" key="2">
    <source>
        <dbReference type="SAM" id="MobiDB-lite"/>
    </source>
</evidence>
<sequence length="190" mass="21740">MTETPNTSSEEIQTSEPSPDNELQVLQQENANLKAELQEQNDRYLMALAEAENSRKRLQKERTEMMQYAVENTLMDFLPPIESMEKALGFASQASEEVKNWAIGFQMILQQFKQIFEEKGVVEYSSKGELFNPYLHEAVEIEETTTIPEETILEEFTKGYKIGDRPIRVAKVKVAKLPAKGNSDSNEEKE</sequence>
<comment type="function">
    <text evidence="1">Participates actively in the response to hyperosmotic and heat shock by preventing the aggregation of stress-denatured proteins, in association with DnaK and GrpE. It is the nucleotide exchange factor for DnaK and may function as a thermosensor. Unfolded proteins bind initially to DnaJ; upon interaction with the DnaJ-bound protein, DnaK hydrolyzes its bound ATP, resulting in the formation of a stable complex. GrpE releases ADP from DnaK; ATP binding to DnaK triggers the release of the substrate protein, thus completing the reaction cycle. Several rounds of ATP-dependent interactions between DnaJ, DnaK and GrpE are required for fully efficient folding.</text>
</comment>
<comment type="subunit">
    <text evidence="1">Homodimer.</text>
</comment>
<comment type="subcellular location">
    <subcellularLocation>
        <location evidence="1">Cytoplasm</location>
    </subcellularLocation>
</comment>
<comment type="similarity">
    <text evidence="1">Belongs to the GrpE family.</text>
</comment>
<name>GRPE_CHLTA</name>
<keyword id="KW-0143">Chaperone</keyword>
<keyword id="KW-0963">Cytoplasm</keyword>
<keyword id="KW-0346">Stress response</keyword>
<gene>
    <name evidence="1" type="primary">grpE</name>
    <name type="ordered locus">CTA_0430</name>
</gene>
<reference key="1">
    <citation type="journal article" date="2005" name="Infect. Immun.">
        <title>Comparative genomic analysis of Chlamydia trachomatis oculotropic and genitotropic strains.</title>
        <authorList>
            <person name="Carlson J.H."/>
            <person name="Porcella S.F."/>
            <person name="McClarty G."/>
            <person name="Caldwell H.D."/>
        </authorList>
    </citation>
    <scope>NUCLEOTIDE SEQUENCE [LARGE SCALE GENOMIC DNA]</scope>
    <source>
        <strain>ATCC VR-571B / DSM 19440 / HAR-13</strain>
    </source>
</reference>
<feature type="chain" id="PRO_1000053568" description="Protein GrpE">
    <location>
        <begin position="1"/>
        <end position="190"/>
    </location>
</feature>
<feature type="region of interest" description="Disordered" evidence="2">
    <location>
        <begin position="1"/>
        <end position="21"/>
    </location>
</feature>
<feature type="compositionally biased region" description="Polar residues" evidence="2">
    <location>
        <begin position="1"/>
        <end position="18"/>
    </location>
</feature>
<organism>
    <name type="scientific">Chlamydia trachomatis serovar A (strain ATCC VR-571B / DSM 19440 / HAR-13)</name>
    <dbReference type="NCBI Taxonomy" id="315277"/>
    <lineage>
        <taxon>Bacteria</taxon>
        <taxon>Pseudomonadati</taxon>
        <taxon>Chlamydiota</taxon>
        <taxon>Chlamydiia</taxon>
        <taxon>Chlamydiales</taxon>
        <taxon>Chlamydiaceae</taxon>
        <taxon>Chlamydia/Chlamydophila group</taxon>
        <taxon>Chlamydia</taxon>
    </lineage>
</organism>